<sequence length="312" mass="35901">MAEFEDQLVFNSISARALKAYFTAKINEMVDELVTRKCPQKKKSQAKKPEVRIPVDLVKSSFVKKFGLCNYGGILISLINSLVENNFFTKDGKLDDTGKKELVLTDVEKRILNAIDKSSPLYIDISDVKVLAARLKRSATQFNFNGHTYHLENDKIEDLINQLVKDESIQLDEKSSIKDSMYVIPDELIDVLKTRLFRSPQVKDNIISRTRLYDYFTRVTKRDESSIYVILKDPRIASILSLETVKMGAFMYTKHSMLTNAISSRVDRYSKKFQESFYEDITEFVKENERVNVSRVVEYLTVPNITISSNAE</sequence>
<organism>
    <name type="scientific">Vaccinia virus (strain L-IVP)</name>
    <name type="common">VACV</name>
    <dbReference type="NCBI Taxonomy" id="31531"/>
    <lineage>
        <taxon>Viruses</taxon>
        <taxon>Varidnaviria</taxon>
        <taxon>Bamfordvirae</taxon>
        <taxon>Nucleocytoviricota</taxon>
        <taxon>Pokkesviricetes</taxon>
        <taxon>Chitovirales</taxon>
        <taxon>Poxviridae</taxon>
        <taxon>Chordopoxvirinae</taxon>
        <taxon>Orthopoxvirus</taxon>
        <taxon>Vaccinia virus</taxon>
    </lineage>
</organism>
<gene>
    <name type="primary">OPG077</name>
</gene>
<name>PG077_VACCP</name>
<keyword id="KW-0238">DNA-binding</keyword>
<keyword id="KW-0946">Virion</keyword>
<proteinExistence type="evidence at transcript level"/>
<feature type="chain" id="PRO_0000099559" description="Telomere-binding protein OPG077">
    <location>
        <begin position="1"/>
        <end position="312"/>
    </location>
</feature>
<reference key="1">
    <citation type="journal article" date="1993" name="Virus Res.">
        <title>Comparative analysis of the conserved region of the orthopoxvirus genome encoding the 36K and 12K proteins.</title>
        <authorList>
            <person name="Ryazankina O.I."/>
            <person name="Muravlev A.I."/>
            <person name="Gutorov V.V."/>
            <person name="Mikrjukov N.N."/>
            <person name="Cheshenko I.O."/>
            <person name="Shchelkunov S.N."/>
        </authorList>
    </citation>
    <scope>NUCLEOTIDE SEQUENCE [GENOMIC DNA]</scope>
</reference>
<protein>
    <recommendedName>
        <fullName>Telomere-binding protein OPG077</fullName>
    </recommendedName>
    <alternativeName>
        <fullName>Telomere-binding protein I1</fullName>
    </alternativeName>
</protein>
<accession>Q9QBG0</accession>
<evidence type="ECO:0000250" key="1">
    <source>
        <dbReference type="UniProtKB" id="P16714"/>
    </source>
</evidence>
<evidence type="ECO:0000305" key="2"/>
<organismHost>
    <name type="scientific">Homo sapiens</name>
    <name type="common">Human</name>
    <dbReference type="NCBI Taxonomy" id="9606"/>
</organismHost>
<comment type="function">
    <text evidence="1">DNA-binding protein which binds to the hairpin form of the viral telomeric sequence. Required for the production of mature virions (MV).</text>
</comment>
<comment type="subcellular location">
    <subcellularLocation>
        <location evidence="1">Virion</location>
    </subcellularLocation>
    <text evidence="1">Present in the virus core.</text>
</comment>
<comment type="induction">
    <text>Expressed in the late phase of the viral replicative cycle.</text>
</comment>
<comment type="miscellaneous">
    <text evidence="1">Each virion contains approximately 670 molecules of OPG077.</text>
</comment>
<comment type="similarity">
    <text evidence="2">Belongs to the orthopoxvirus OPG077 family.</text>
</comment>
<dbReference type="EMBL" id="X61165">
    <property type="protein sequence ID" value="CAB57396.1"/>
    <property type="molecule type" value="Genomic_DNA"/>
</dbReference>
<dbReference type="EMBL" id="X61166">
    <property type="protein sequence ID" value="CAB57396.1"/>
    <property type="status" value="JOINED"/>
    <property type="molecule type" value="Genomic_DNA"/>
</dbReference>
<dbReference type="PIR" id="PN0121">
    <property type="entry name" value="PN0121"/>
</dbReference>
<dbReference type="SMR" id="Q9QBG0"/>
<dbReference type="GO" id="GO:0044423">
    <property type="term" value="C:virion component"/>
    <property type="evidence" value="ECO:0007669"/>
    <property type="project" value="UniProtKB-KW"/>
</dbReference>
<dbReference type="GO" id="GO:0003677">
    <property type="term" value="F:DNA binding"/>
    <property type="evidence" value="ECO:0007669"/>
    <property type="project" value="UniProtKB-KW"/>
</dbReference>
<dbReference type="InterPro" id="IPR004969">
    <property type="entry name" value="Poxvirus_I1"/>
</dbReference>
<dbReference type="Pfam" id="PF03289">
    <property type="entry name" value="Pox_I1"/>
    <property type="match status" value="1"/>
</dbReference>
<dbReference type="PIRSF" id="PIRSF015625">
    <property type="entry name" value="VAC_I1L"/>
    <property type="match status" value="1"/>
</dbReference>